<keyword id="KW-0732">Signal</keyword>
<comment type="function">
    <text evidence="1">Adhesin that binds to the host cell extracellular matrix proteins fibronectin, fibrinogen, collagen, and vitronectin.</text>
</comment>
<comment type="subcellular location">
    <subcellularLocation>
        <location evidence="1">Cell surface</location>
    </subcellularLocation>
</comment>
<name>EMP_STAAW</name>
<evidence type="ECO:0000250" key="1"/>
<protein>
    <recommendedName>
        <fullName>Extracellular matrix protein-binding protein emp</fullName>
    </recommendedName>
</protein>
<accession>Q8NXI8</accession>
<sequence length="340" mass="38452">MKKKLLVLTMSTLFATQIMNSNHAKASVTESVDKKFVVPESGINKIIPTYNEFKKAPKVNVGNLADNKNFVASEDKLNKIVDSSAASKIVDKNFAVPESKLGNIVPEYKEINNRVNVATNNPASQQVDKHFVAKGPEVNRFITQNKVNHHFITTQTHYKKVITSYKSTHVHKHVNHAKDSINKHFIVKPSESPRYTHPSQSLIIKHHFAVPGYHAHKFVTPGHASIKINHFCVVPQINSFKVIPPYGHNSHRMHVPSFQNNTTATHQNAKVNKAYDYKYFYSYKVVKGVKKYFSFSQSNGYKIGKPSLNIKNVNYQYAVPSYSPTHYVPEFKGSLPAPRV</sequence>
<organism>
    <name type="scientific">Staphylococcus aureus (strain MW2)</name>
    <dbReference type="NCBI Taxonomy" id="196620"/>
    <lineage>
        <taxon>Bacteria</taxon>
        <taxon>Bacillati</taxon>
        <taxon>Bacillota</taxon>
        <taxon>Bacilli</taxon>
        <taxon>Bacillales</taxon>
        <taxon>Staphylococcaceae</taxon>
        <taxon>Staphylococcus</taxon>
    </lineage>
</organism>
<proteinExistence type="inferred from homology"/>
<gene>
    <name type="primary">emp</name>
    <name type="ordered locus">MW0767</name>
</gene>
<reference key="1">
    <citation type="journal article" date="2002" name="Lancet">
        <title>Genome and virulence determinants of high virulence community-acquired MRSA.</title>
        <authorList>
            <person name="Baba T."/>
            <person name="Takeuchi F."/>
            <person name="Kuroda M."/>
            <person name="Yuzawa H."/>
            <person name="Aoki K."/>
            <person name="Oguchi A."/>
            <person name="Nagai Y."/>
            <person name="Iwama N."/>
            <person name="Asano K."/>
            <person name="Naimi T."/>
            <person name="Kuroda H."/>
            <person name="Cui L."/>
            <person name="Yamamoto K."/>
            <person name="Hiramatsu K."/>
        </authorList>
    </citation>
    <scope>NUCLEOTIDE SEQUENCE [LARGE SCALE GENOMIC DNA]</scope>
    <source>
        <strain>MW2</strain>
    </source>
</reference>
<feature type="signal peptide" evidence="1">
    <location>
        <begin position="1"/>
        <end position="26"/>
    </location>
</feature>
<feature type="chain" id="PRO_0000271540" description="Extracellular matrix protein-binding protein emp">
    <location>
        <begin position="27"/>
        <end position="340"/>
    </location>
</feature>
<dbReference type="EMBL" id="BA000033">
    <property type="protein sequence ID" value="BAB94632.1"/>
    <property type="molecule type" value="Genomic_DNA"/>
</dbReference>
<dbReference type="RefSeq" id="WP_000728062.1">
    <property type="nucleotide sequence ID" value="NC_003923.1"/>
</dbReference>
<dbReference type="KEGG" id="sam:MW0767"/>
<dbReference type="HOGENOM" id="CLU_078520_0_0_9"/>
<dbReference type="GO" id="GO:0009986">
    <property type="term" value="C:cell surface"/>
    <property type="evidence" value="ECO:0007669"/>
    <property type="project" value="UniProtKB-SubCell"/>
</dbReference>